<organism>
    <name type="scientific">Bartonella tribocorum (strain CIP 105476 / IBS 506)</name>
    <dbReference type="NCBI Taxonomy" id="382640"/>
    <lineage>
        <taxon>Bacteria</taxon>
        <taxon>Pseudomonadati</taxon>
        <taxon>Pseudomonadota</taxon>
        <taxon>Alphaproteobacteria</taxon>
        <taxon>Hyphomicrobiales</taxon>
        <taxon>Bartonellaceae</taxon>
        <taxon>Bartonella</taxon>
    </lineage>
</organism>
<proteinExistence type="inferred from homology"/>
<reference key="1">
    <citation type="journal article" date="2007" name="Nat. Genet.">
        <title>Genomic analysis of Bartonella identifies type IV secretion systems as host adaptability factors.</title>
        <authorList>
            <person name="Saenz H.L."/>
            <person name="Engel P."/>
            <person name="Stoeckli M.C."/>
            <person name="Lanz C."/>
            <person name="Raddatz G."/>
            <person name="Vayssier-Taussat M."/>
            <person name="Birtles R."/>
            <person name="Schuster S.C."/>
            <person name="Dehio C."/>
        </authorList>
    </citation>
    <scope>NUCLEOTIDE SEQUENCE [LARGE SCALE GENOMIC DNA]</scope>
    <source>
        <strain>CIP 105476 / IBS 506</strain>
    </source>
</reference>
<evidence type="ECO:0000255" key="1">
    <source>
        <dbReference type="HAMAP-Rule" id="MF_01588"/>
    </source>
</evidence>
<feature type="chain" id="PRO_0000340329" description="DNA ligase">
    <location>
        <begin position="1"/>
        <end position="719"/>
    </location>
</feature>
<feature type="domain" description="BRCT" evidence="1">
    <location>
        <begin position="638"/>
        <end position="719"/>
    </location>
</feature>
<feature type="active site" description="N6-AMP-lysine intermediate" evidence="1">
    <location>
        <position position="127"/>
    </location>
</feature>
<feature type="binding site" evidence="1">
    <location>
        <begin position="42"/>
        <end position="46"/>
    </location>
    <ligand>
        <name>NAD(+)</name>
        <dbReference type="ChEBI" id="CHEBI:57540"/>
    </ligand>
</feature>
<feature type="binding site" evidence="1">
    <location>
        <begin position="91"/>
        <end position="92"/>
    </location>
    <ligand>
        <name>NAD(+)</name>
        <dbReference type="ChEBI" id="CHEBI:57540"/>
    </ligand>
</feature>
<feature type="binding site" evidence="1">
    <location>
        <position position="125"/>
    </location>
    <ligand>
        <name>NAD(+)</name>
        <dbReference type="ChEBI" id="CHEBI:57540"/>
    </ligand>
</feature>
<feature type="binding site" evidence="1">
    <location>
        <position position="148"/>
    </location>
    <ligand>
        <name>NAD(+)</name>
        <dbReference type="ChEBI" id="CHEBI:57540"/>
    </ligand>
</feature>
<feature type="binding site" evidence="1">
    <location>
        <position position="184"/>
    </location>
    <ligand>
        <name>NAD(+)</name>
        <dbReference type="ChEBI" id="CHEBI:57540"/>
    </ligand>
</feature>
<feature type="binding site" evidence="1">
    <location>
        <position position="300"/>
    </location>
    <ligand>
        <name>NAD(+)</name>
        <dbReference type="ChEBI" id="CHEBI:57540"/>
    </ligand>
</feature>
<feature type="binding site" evidence="1">
    <location>
        <position position="324"/>
    </location>
    <ligand>
        <name>NAD(+)</name>
        <dbReference type="ChEBI" id="CHEBI:57540"/>
    </ligand>
</feature>
<feature type="binding site" evidence="1">
    <location>
        <position position="429"/>
    </location>
    <ligand>
        <name>Zn(2+)</name>
        <dbReference type="ChEBI" id="CHEBI:29105"/>
    </ligand>
</feature>
<feature type="binding site" evidence="1">
    <location>
        <position position="432"/>
    </location>
    <ligand>
        <name>Zn(2+)</name>
        <dbReference type="ChEBI" id="CHEBI:29105"/>
    </ligand>
</feature>
<feature type="binding site" evidence="1">
    <location>
        <position position="447"/>
    </location>
    <ligand>
        <name>Zn(2+)</name>
        <dbReference type="ChEBI" id="CHEBI:29105"/>
    </ligand>
</feature>
<feature type="binding site" evidence="1">
    <location>
        <position position="453"/>
    </location>
    <ligand>
        <name>Zn(2+)</name>
        <dbReference type="ChEBI" id="CHEBI:29105"/>
    </ligand>
</feature>
<protein>
    <recommendedName>
        <fullName evidence="1">DNA ligase</fullName>
        <ecNumber evidence="1">6.5.1.2</ecNumber>
    </recommendedName>
    <alternativeName>
        <fullName evidence="1">Polydeoxyribonucleotide synthase [NAD(+)]</fullName>
    </alternativeName>
</protein>
<comment type="function">
    <text evidence="1">DNA ligase that catalyzes the formation of phosphodiester linkages between 5'-phosphoryl and 3'-hydroxyl groups in double-stranded DNA using NAD as a coenzyme and as the energy source for the reaction. It is essential for DNA replication and repair of damaged DNA.</text>
</comment>
<comment type="catalytic activity">
    <reaction evidence="1">
        <text>NAD(+) + (deoxyribonucleotide)n-3'-hydroxyl + 5'-phospho-(deoxyribonucleotide)m = (deoxyribonucleotide)n+m + AMP + beta-nicotinamide D-nucleotide.</text>
        <dbReference type="EC" id="6.5.1.2"/>
    </reaction>
</comment>
<comment type="cofactor">
    <cofactor evidence="1">
        <name>Mg(2+)</name>
        <dbReference type="ChEBI" id="CHEBI:18420"/>
    </cofactor>
    <cofactor evidence="1">
        <name>Mn(2+)</name>
        <dbReference type="ChEBI" id="CHEBI:29035"/>
    </cofactor>
</comment>
<comment type="similarity">
    <text evidence="1">Belongs to the NAD-dependent DNA ligase family. LigA subfamily.</text>
</comment>
<dbReference type="EC" id="6.5.1.2" evidence="1"/>
<dbReference type="EMBL" id="AM260525">
    <property type="protein sequence ID" value="CAK01920.1"/>
    <property type="molecule type" value="Genomic_DNA"/>
</dbReference>
<dbReference type="RefSeq" id="WP_012232046.1">
    <property type="nucleotide sequence ID" value="NC_010161.1"/>
</dbReference>
<dbReference type="SMR" id="A9IW95"/>
<dbReference type="KEGG" id="btr:BT_1581"/>
<dbReference type="eggNOG" id="COG0272">
    <property type="taxonomic scope" value="Bacteria"/>
</dbReference>
<dbReference type="HOGENOM" id="CLU_007764_2_0_5"/>
<dbReference type="Proteomes" id="UP000001592">
    <property type="component" value="Chromosome"/>
</dbReference>
<dbReference type="GO" id="GO:0005829">
    <property type="term" value="C:cytosol"/>
    <property type="evidence" value="ECO:0007669"/>
    <property type="project" value="TreeGrafter"/>
</dbReference>
<dbReference type="GO" id="GO:0003677">
    <property type="term" value="F:DNA binding"/>
    <property type="evidence" value="ECO:0007669"/>
    <property type="project" value="InterPro"/>
</dbReference>
<dbReference type="GO" id="GO:0003911">
    <property type="term" value="F:DNA ligase (NAD+) activity"/>
    <property type="evidence" value="ECO:0007669"/>
    <property type="project" value="UniProtKB-UniRule"/>
</dbReference>
<dbReference type="GO" id="GO:0046872">
    <property type="term" value="F:metal ion binding"/>
    <property type="evidence" value="ECO:0007669"/>
    <property type="project" value="UniProtKB-KW"/>
</dbReference>
<dbReference type="GO" id="GO:0006281">
    <property type="term" value="P:DNA repair"/>
    <property type="evidence" value="ECO:0007669"/>
    <property type="project" value="UniProtKB-KW"/>
</dbReference>
<dbReference type="GO" id="GO:0006260">
    <property type="term" value="P:DNA replication"/>
    <property type="evidence" value="ECO:0007669"/>
    <property type="project" value="UniProtKB-KW"/>
</dbReference>
<dbReference type="CDD" id="cd17748">
    <property type="entry name" value="BRCT_DNA_ligase_like"/>
    <property type="match status" value="1"/>
</dbReference>
<dbReference type="CDD" id="cd00114">
    <property type="entry name" value="LIGANc"/>
    <property type="match status" value="1"/>
</dbReference>
<dbReference type="FunFam" id="3.30.470.30:FF:000001">
    <property type="entry name" value="DNA ligase"/>
    <property type="match status" value="1"/>
</dbReference>
<dbReference type="Gene3D" id="6.20.10.30">
    <property type="match status" value="1"/>
</dbReference>
<dbReference type="Gene3D" id="1.10.150.20">
    <property type="entry name" value="5' to 3' exonuclease, C-terminal subdomain"/>
    <property type="match status" value="2"/>
</dbReference>
<dbReference type="Gene3D" id="3.40.50.10190">
    <property type="entry name" value="BRCT domain"/>
    <property type="match status" value="1"/>
</dbReference>
<dbReference type="Gene3D" id="3.30.470.30">
    <property type="entry name" value="DNA ligase/mRNA capping enzyme"/>
    <property type="match status" value="1"/>
</dbReference>
<dbReference type="Gene3D" id="1.10.287.610">
    <property type="entry name" value="Helix hairpin bin"/>
    <property type="match status" value="1"/>
</dbReference>
<dbReference type="Gene3D" id="2.40.50.140">
    <property type="entry name" value="Nucleic acid-binding proteins"/>
    <property type="match status" value="1"/>
</dbReference>
<dbReference type="HAMAP" id="MF_01588">
    <property type="entry name" value="DNA_ligase_A"/>
    <property type="match status" value="1"/>
</dbReference>
<dbReference type="InterPro" id="IPR001357">
    <property type="entry name" value="BRCT_dom"/>
</dbReference>
<dbReference type="InterPro" id="IPR036420">
    <property type="entry name" value="BRCT_dom_sf"/>
</dbReference>
<dbReference type="InterPro" id="IPR041663">
    <property type="entry name" value="DisA/LigA_HHH"/>
</dbReference>
<dbReference type="InterPro" id="IPR001679">
    <property type="entry name" value="DNA_ligase"/>
</dbReference>
<dbReference type="InterPro" id="IPR018239">
    <property type="entry name" value="DNA_ligase_AS"/>
</dbReference>
<dbReference type="InterPro" id="IPR033136">
    <property type="entry name" value="DNA_ligase_CS"/>
</dbReference>
<dbReference type="InterPro" id="IPR013839">
    <property type="entry name" value="DNAligase_adenylation"/>
</dbReference>
<dbReference type="InterPro" id="IPR013840">
    <property type="entry name" value="DNAligase_N"/>
</dbReference>
<dbReference type="InterPro" id="IPR003583">
    <property type="entry name" value="Hlx-hairpin-Hlx_DNA-bd_motif"/>
</dbReference>
<dbReference type="InterPro" id="IPR012340">
    <property type="entry name" value="NA-bd_OB-fold"/>
</dbReference>
<dbReference type="InterPro" id="IPR004150">
    <property type="entry name" value="NAD_DNA_ligase_OB"/>
</dbReference>
<dbReference type="InterPro" id="IPR010994">
    <property type="entry name" value="RuvA_2-like"/>
</dbReference>
<dbReference type="InterPro" id="IPR004149">
    <property type="entry name" value="Znf_DNAligase_C4"/>
</dbReference>
<dbReference type="NCBIfam" id="TIGR00575">
    <property type="entry name" value="dnlj"/>
    <property type="match status" value="1"/>
</dbReference>
<dbReference type="NCBIfam" id="NF005932">
    <property type="entry name" value="PRK07956.1"/>
    <property type="match status" value="1"/>
</dbReference>
<dbReference type="PANTHER" id="PTHR23389">
    <property type="entry name" value="CHROMOSOME TRANSMISSION FIDELITY FACTOR 18"/>
    <property type="match status" value="1"/>
</dbReference>
<dbReference type="PANTHER" id="PTHR23389:SF9">
    <property type="entry name" value="DNA LIGASE"/>
    <property type="match status" value="1"/>
</dbReference>
<dbReference type="Pfam" id="PF00533">
    <property type="entry name" value="BRCT"/>
    <property type="match status" value="1"/>
</dbReference>
<dbReference type="Pfam" id="PF01653">
    <property type="entry name" value="DNA_ligase_aden"/>
    <property type="match status" value="1"/>
</dbReference>
<dbReference type="Pfam" id="PF03120">
    <property type="entry name" value="DNA_ligase_OB"/>
    <property type="match status" value="1"/>
</dbReference>
<dbReference type="Pfam" id="PF03119">
    <property type="entry name" value="DNA_ligase_ZBD"/>
    <property type="match status" value="1"/>
</dbReference>
<dbReference type="Pfam" id="PF12826">
    <property type="entry name" value="HHH_2"/>
    <property type="match status" value="1"/>
</dbReference>
<dbReference type="PIRSF" id="PIRSF001604">
    <property type="entry name" value="LigA"/>
    <property type="match status" value="1"/>
</dbReference>
<dbReference type="SMART" id="SM00292">
    <property type="entry name" value="BRCT"/>
    <property type="match status" value="1"/>
</dbReference>
<dbReference type="SMART" id="SM00278">
    <property type="entry name" value="HhH1"/>
    <property type="match status" value="3"/>
</dbReference>
<dbReference type="SMART" id="SM00532">
    <property type="entry name" value="LIGANc"/>
    <property type="match status" value="1"/>
</dbReference>
<dbReference type="SUPFAM" id="SSF52113">
    <property type="entry name" value="BRCT domain"/>
    <property type="match status" value="1"/>
</dbReference>
<dbReference type="SUPFAM" id="SSF56091">
    <property type="entry name" value="DNA ligase/mRNA capping enzyme, catalytic domain"/>
    <property type="match status" value="1"/>
</dbReference>
<dbReference type="SUPFAM" id="SSF50249">
    <property type="entry name" value="Nucleic acid-binding proteins"/>
    <property type="match status" value="1"/>
</dbReference>
<dbReference type="SUPFAM" id="SSF47781">
    <property type="entry name" value="RuvA domain 2-like"/>
    <property type="match status" value="1"/>
</dbReference>
<dbReference type="PROSITE" id="PS50172">
    <property type="entry name" value="BRCT"/>
    <property type="match status" value="1"/>
</dbReference>
<dbReference type="PROSITE" id="PS01055">
    <property type="entry name" value="DNA_LIGASE_N1"/>
    <property type="match status" value="1"/>
</dbReference>
<dbReference type="PROSITE" id="PS01056">
    <property type="entry name" value="DNA_LIGASE_N2"/>
    <property type="match status" value="1"/>
</dbReference>
<keyword id="KW-0227">DNA damage</keyword>
<keyword id="KW-0234">DNA repair</keyword>
<keyword id="KW-0235">DNA replication</keyword>
<keyword id="KW-0436">Ligase</keyword>
<keyword id="KW-0460">Magnesium</keyword>
<keyword id="KW-0464">Manganese</keyword>
<keyword id="KW-0479">Metal-binding</keyword>
<keyword id="KW-0520">NAD</keyword>
<keyword id="KW-0862">Zinc</keyword>
<gene>
    <name evidence="1" type="primary">ligA</name>
    <name type="ordered locus">BT_1581</name>
</gene>
<sequence length="719" mass="80428">MNKDGIKNLTVVEAERELEWLAKEIARHDVLYNRDDQPEISDAEYDALRRRNAEIEALFPELIRVDSPSHKIGAAISEKFEKSVHAQPMLSLDNAFSAEDVYEFVERIRRFLRLPETQVLEITAEPKIDGLSLSLRYEKGRLVRAATRGDGTVGENVTANARTIADIPQVLQGDFPDVIEVRGEVYMGREDFQALNISQQEKGKLTFANPRNAAAGSLRQLDSRITASRKLQFFAYACGEVSEIFAESQMEMMTKLKEYGFVINPLTKVFKTVEDIISYYRDIEERRYSLNYDIDGIVYKVNDLMLQKRLGFVSRSPRWAIAHKFPAEKAMALLEDIDIQVGRTGALTPVARLTPITIGGVVVTNASLHNEDYIKGIGHKGEPIREGRDIRIGDTVIIQRAGDVIPQVVDIVLEKRQKDSSAFVFPDLCPACGSHAVREVGEAVRRCTGGLICPAQAIERIRHFVARNAFDIEGLGKKQVEFFFHAQDEALCIHTPADIFTLERRQEKSLIRLENIEGFGTVSVRKLYDAINARREIPLSRFLFALGIRHVGEVNARRLARAYQTYTAFETAAMEALMPCKQDNKEGNEAWMELTNIEGIGPQVGSAIVDFYQEAHNREVLAVLLEEITPLDEVPIMTASSPIAEKIIVFTGTLAHMSRDEAKALAERLGAKTSGSLSKKTDLLVAGPGAGSKLTKAQEFGVQVIDEEAWMRLIKGHNI</sequence>
<name>DNLJ_BART1</name>
<accession>A9IW95</accession>